<accession>Q6PT90</accession>
<sequence length="105" mass="10897">MSWIVLLIAGLLEVVWAIGLKYTHGFTRLTPSIITIAAMIVSIAMLSWAMRTLPVGTAYAVWTGIGAVGAAITGILLLGESASPARLLSLGLIVAGIIGLKLSTH</sequence>
<reference key="1">
    <citation type="journal article" date="2004" name="Antimicrob. Agents Chemother.">
        <title>DNA sequence analysis of regions surrounding blaCMY-2 from multiple Salmonella plasmid backbones.</title>
        <authorList>
            <person name="Giles W.P."/>
            <person name="Benson A.K."/>
            <person name="Olson M.E."/>
            <person name="Hutkins R.W."/>
            <person name="Whichard J.M."/>
            <person name="Winokur P.L."/>
            <person name="Fey P.D."/>
        </authorList>
    </citation>
    <scope>NUCLEOTIDE SEQUENCE [GENOMIC DNA]</scope>
    <source>
        <plasmid>pIW759</plasmid>
        <plasmid>pNF4656</plasmid>
    </source>
</reference>
<feature type="chain" id="PRO_0000108106" description="Guanidinium exporter">
    <location>
        <begin position="1"/>
        <end position="105"/>
    </location>
</feature>
<feature type="transmembrane region" description="Helical" evidence="2">
    <location>
        <begin position="1"/>
        <end position="21"/>
    </location>
</feature>
<feature type="topological domain" description="Cytoplasmic" evidence="2">
    <location>
        <begin position="22"/>
        <end position="28"/>
    </location>
</feature>
<feature type="transmembrane region" description="Helical" evidence="2">
    <location>
        <begin position="29"/>
        <end position="49"/>
    </location>
</feature>
<feature type="topological domain" description="Periplasmic" evidence="2">
    <location>
        <begin position="50"/>
        <end position="57"/>
    </location>
</feature>
<feature type="transmembrane region" description="Helical" evidence="2">
    <location>
        <begin position="58"/>
        <end position="78"/>
    </location>
</feature>
<feature type="topological domain" description="Cytoplasmic" evidence="2">
    <location>
        <begin position="79"/>
        <end position="81"/>
    </location>
</feature>
<feature type="transmembrane region" description="Helical" evidence="2">
    <location>
        <begin position="82"/>
        <end position="102"/>
    </location>
</feature>
<feature type="topological domain" description="Periplasmic" evidence="2">
    <location>
        <begin position="103"/>
        <end position="105"/>
    </location>
</feature>
<dbReference type="EMBL" id="AY581205">
    <property type="protein sequence ID" value="AAT01054.1"/>
    <property type="molecule type" value="Genomic_DNA"/>
</dbReference>
<dbReference type="EMBL" id="AY581207">
    <property type="protein sequence ID" value="AAT01062.1"/>
    <property type="molecule type" value="Genomic_DNA"/>
</dbReference>
<dbReference type="RefSeq" id="WP_000118520.1">
    <property type="nucleotide sequence ID" value="NZ_WIDF01000020.1"/>
</dbReference>
<dbReference type="RefSeq" id="YP_008574735.1">
    <property type="nucleotide sequence ID" value="NC_022372.1"/>
</dbReference>
<dbReference type="SMR" id="Q6PT90"/>
<dbReference type="GeneID" id="93521401"/>
<dbReference type="GO" id="GO:0005886">
    <property type="term" value="C:plasma membrane"/>
    <property type="evidence" value="ECO:0007669"/>
    <property type="project" value="UniProtKB-SubCell"/>
</dbReference>
<dbReference type="GO" id="GO:0022857">
    <property type="term" value="F:transmembrane transporter activity"/>
    <property type="evidence" value="ECO:0007669"/>
    <property type="project" value="InterPro"/>
</dbReference>
<dbReference type="GO" id="GO:0006811">
    <property type="term" value="P:monoatomic ion transport"/>
    <property type="evidence" value="ECO:0007669"/>
    <property type="project" value="UniProtKB-KW"/>
</dbReference>
<dbReference type="FunFam" id="1.10.3730.20:FF:000001">
    <property type="entry name" value="Quaternary ammonium compound resistance transporter SugE"/>
    <property type="match status" value="1"/>
</dbReference>
<dbReference type="Gene3D" id="1.10.3730.20">
    <property type="match status" value="1"/>
</dbReference>
<dbReference type="InterPro" id="IPR000390">
    <property type="entry name" value="Small_drug/metabolite_transptr"/>
</dbReference>
<dbReference type="InterPro" id="IPR045324">
    <property type="entry name" value="Small_multidrug_res"/>
</dbReference>
<dbReference type="NCBIfam" id="NF008512">
    <property type="entry name" value="PRK11431.1"/>
    <property type="match status" value="1"/>
</dbReference>
<dbReference type="PANTHER" id="PTHR30561:SF0">
    <property type="entry name" value="GUANIDINIUM EXPORTER"/>
    <property type="match status" value="1"/>
</dbReference>
<dbReference type="PANTHER" id="PTHR30561">
    <property type="entry name" value="SMR FAMILY PROTON-DEPENDENT DRUG EFFLUX TRANSPORTER SUGE"/>
    <property type="match status" value="1"/>
</dbReference>
<dbReference type="Pfam" id="PF00893">
    <property type="entry name" value="Multi_Drug_Res"/>
    <property type="match status" value="1"/>
</dbReference>
<dbReference type="SUPFAM" id="SSF103481">
    <property type="entry name" value="Multidrug resistance efflux transporter EmrE"/>
    <property type="match status" value="1"/>
</dbReference>
<evidence type="ECO:0000250" key="1">
    <source>
        <dbReference type="UniProtKB" id="P69937"/>
    </source>
</evidence>
<evidence type="ECO:0000255" key="2"/>
<evidence type="ECO:0000305" key="3"/>
<comment type="function">
    <text evidence="1">Guanidinium ion exporter. Couples guanidinium export to the proton motive force, exchanging one guanidinium ion for two protons.</text>
</comment>
<comment type="subcellular location">
    <subcellularLocation>
        <location evidence="1">Cell inner membrane</location>
        <topology evidence="1">Multi-pass membrane protein</topology>
    </subcellularLocation>
</comment>
<comment type="similarity">
    <text evidence="3">Belongs to the drug/metabolite transporter (DMT) superfamily. Small multidrug resistance (SMR) (TC 2.A.7.1) family. Gdx/SugE subfamily.</text>
</comment>
<organism>
    <name type="scientific">Salmonella typhimurium</name>
    <dbReference type="NCBI Taxonomy" id="90371"/>
    <lineage>
        <taxon>Bacteria</taxon>
        <taxon>Pseudomonadati</taxon>
        <taxon>Pseudomonadota</taxon>
        <taxon>Gammaproteobacteria</taxon>
        <taxon>Enterobacterales</taxon>
        <taxon>Enterobacteriaceae</taxon>
        <taxon>Salmonella</taxon>
    </lineage>
</organism>
<geneLocation type="plasmid">
    <name>pIW759</name>
</geneLocation>
<geneLocation type="plasmid">
    <name>pNF4656</name>
</geneLocation>
<proteinExistence type="inferred from homology"/>
<protein>
    <recommendedName>
        <fullName evidence="1">Guanidinium exporter</fullName>
    </recommendedName>
</protein>
<keyword id="KW-0997">Cell inner membrane</keyword>
<keyword id="KW-1003">Cell membrane</keyword>
<keyword id="KW-0406">Ion transport</keyword>
<keyword id="KW-0472">Membrane</keyword>
<keyword id="KW-0614">Plasmid</keyword>
<keyword id="KW-0812">Transmembrane</keyword>
<keyword id="KW-1133">Transmembrane helix</keyword>
<keyword id="KW-0813">Transport</keyword>
<gene>
    <name evidence="1" type="primary">gdx</name>
    <name type="synonym">sugE</name>
</gene>
<name>GDX_SALTM</name>